<dbReference type="EC" id="2.1.1.98" evidence="1"/>
<dbReference type="EMBL" id="CR936257">
    <property type="protein sequence ID" value="CAI49033.1"/>
    <property type="molecule type" value="Genomic_DNA"/>
</dbReference>
<dbReference type="RefSeq" id="WP_011322665.1">
    <property type="nucleotide sequence ID" value="NC_007426.1"/>
</dbReference>
<dbReference type="SMR" id="Q3IS55"/>
<dbReference type="STRING" id="348780.NP_1884A"/>
<dbReference type="EnsemblBacteria" id="CAI49033">
    <property type="protein sequence ID" value="CAI49033"/>
    <property type="gene ID" value="NP_1884A"/>
</dbReference>
<dbReference type="GeneID" id="3701290"/>
<dbReference type="KEGG" id="nph:NP_1884A"/>
<dbReference type="eggNOG" id="arCOG04161">
    <property type="taxonomic scope" value="Archaea"/>
</dbReference>
<dbReference type="HOGENOM" id="CLU_066040_0_0_2"/>
<dbReference type="OrthoDB" id="39139at2157"/>
<dbReference type="UniPathway" id="UPA00559"/>
<dbReference type="Proteomes" id="UP000002698">
    <property type="component" value="Chromosome"/>
</dbReference>
<dbReference type="GO" id="GO:0004164">
    <property type="term" value="F:diphthine synthase activity"/>
    <property type="evidence" value="ECO:0007669"/>
    <property type="project" value="UniProtKB-UniRule"/>
</dbReference>
<dbReference type="GO" id="GO:0032259">
    <property type="term" value="P:methylation"/>
    <property type="evidence" value="ECO:0007669"/>
    <property type="project" value="UniProtKB-KW"/>
</dbReference>
<dbReference type="GO" id="GO:0017183">
    <property type="term" value="P:protein histidyl modification to diphthamide"/>
    <property type="evidence" value="ECO:0007669"/>
    <property type="project" value="UniProtKB-UniRule"/>
</dbReference>
<dbReference type="CDD" id="cd11647">
    <property type="entry name" value="DHP5_DphB"/>
    <property type="match status" value="1"/>
</dbReference>
<dbReference type="Gene3D" id="3.40.1010.10">
    <property type="entry name" value="Cobalt-precorrin-4 Transmethylase, Domain 1"/>
    <property type="match status" value="1"/>
</dbReference>
<dbReference type="Gene3D" id="3.30.950.10">
    <property type="entry name" value="Methyltransferase, Cobalt-precorrin-4 Transmethylase, Domain 2"/>
    <property type="match status" value="1"/>
</dbReference>
<dbReference type="HAMAP" id="MF_01084">
    <property type="entry name" value="Diphthine_synth"/>
    <property type="match status" value="1"/>
</dbReference>
<dbReference type="InterPro" id="IPR000878">
    <property type="entry name" value="4pyrrol_Mease"/>
</dbReference>
<dbReference type="InterPro" id="IPR035996">
    <property type="entry name" value="4pyrrol_Methylase_sf"/>
</dbReference>
<dbReference type="InterPro" id="IPR014777">
    <property type="entry name" value="4pyrrole_Mease_sub1"/>
</dbReference>
<dbReference type="InterPro" id="IPR014776">
    <property type="entry name" value="4pyrrole_Mease_sub2"/>
</dbReference>
<dbReference type="InterPro" id="IPR004551">
    <property type="entry name" value="Dphthn_synthase"/>
</dbReference>
<dbReference type="NCBIfam" id="TIGR00522">
    <property type="entry name" value="dph5"/>
    <property type="match status" value="1"/>
</dbReference>
<dbReference type="PANTHER" id="PTHR10882:SF0">
    <property type="entry name" value="DIPHTHINE METHYL ESTER SYNTHASE"/>
    <property type="match status" value="1"/>
</dbReference>
<dbReference type="PANTHER" id="PTHR10882">
    <property type="entry name" value="DIPHTHINE SYNTHASE"/>
    <property type="match status" value="1"/>
</dbReference>
<dbReference type="Pfam" id="PF00590">
    <property type="entry name" value="TP_methylase"/>
    <property type="match status" value="1"/>
</dbReference>
<dbReference type="PIRSF" id="PIRSF036432">
    <property type="entry name" value="Diphthine_synth"/>
    <property type="match status" value="1"/>
</dbReference>
<dbReference type="SUPFAM" id="SSF53790">
    <property type="entry name" value="Tetrapyrrole methylase"/>
    <property type="match status" value="1"/>
</dbReference>
<accession>Q3IS55</accession>
<feature type="chain" id="PRO_1000064827" description="Diphthine synthase">
    <location>
        <begin position="1"/>
        <end position="266"/>
    </location>
</feature>
<feature type="binding site" evidence="1">
    <location>
        <position position="9"/>
    </location>
    <ligand>
        <name>S-adenosyl-L-methionine</name>
        <dbReference type="ChEBI" id="CHEBI:59789"/>
    </ligand>
</feature>
<feature type="binding site" evidence="1">
    <location>
        <position position="85"/>
    </location>
    <ligand>
        <name>S-adenosyl-L-methionine</name>
        <dbReference type="ChEBI" id="CHEBI:59789"/>
    </ligand>
</feature>
<feature type="binding site" evidence="1">
    <location>
        <position position="88"/>
    </location>
    <ligand>
        <name>S-adenosyl-L-methionine</name>
        <dbReference type="ChEBI" id="CHEBI:59789"/>
    </ligand>
</feature>
<feature type="binding site" evidence="1">
    <location>
        <begin position="113"/>
        <end position="114"/>
    </location>
    <ligand>
        <name>S-adenosyl-L-methionine</name>
        <dbReference type="ChEBI" id="CHEBI:59789"/>
    </ligand>
</feature>
<feature type="binding site" evidence="1">
    <location>
        <position position="168"/>
    </location>
    <ligand>
        <name>S-adenosyl-L-methionine</name>
        <dbReference type="ChEBI" id="CHEBI:59789"/>
    </ligand>
</feature>
<feature type="binding site" evidence="1">
    <location>
        <position position="210"/>
    </location>
    <ligand>
        <name>S-adenosyl-L-methionine</name>
        <dbReference type="ChEBI" id="CHEBI:59789"/>
    </ligand>
</feature>
<feature type="binding site" evidence="1">
    <location>
        <position position="235"/>
    </location>
    <ligand>
        <name>S-adenosyl-L-methionine</name>
        <dbReference type="ChEBI" id="CHEBI:59789"/>
    </ligand>
</feature>
<comment type="function">
    <text evidence="1">S-adenosyl-L-methionine-dependent methyltransferase that catalyzes the trimethylation of the amino group of the modified target histidine residue in translation elongation factor 2 (EF-2), to form an intermediate called diphthine. The three successive methylation reactions represent the second step of diphthamide biosynthesis.</text>
</comment>
<comment type="catalytic activity">
    <reaction evidence="1">
        <text>2-[(3S)-amino-3-carboxypropyl]-L-histidyl-[translation elongation factor 2] + 3 S-adenosyl-L-methionine = diphthine-[translation elongation factor 2] + 3 S-adenosyl-L-homocysteine + 3 H(+)</text>
        <dbReference type="Rhea" id="RHEA:36415"/>
        <dbReference type="Rhea" id="RHEA-COMP:9749"/>
        <dbReference type="Rhea" id="RHEA-COMP:10172"/>
        <dbReference type="ChEBI" id="CHEBI:15378"/>
        <dbReference type="ChEBI" id="CHEBI:57856"/>
        <dbReference type="ChEBI" id="CHEBI:59789"/>
        <dbReference type="ChEBI" id="CHEBI:73995"/>
        <dbReference type="ChEBI" id="CHEBI:82696"/>
        <dbReference type="EC" id="2.1.1.98"/>
    </reaction>
</comment>
<comment type="pathway">
    <text evidence="1">Protein modification; peptidyl-diphthamide biosynthesis.</text>
</comment>
<comment type="subunit">
    <text evidence="1">Homodimer.</text>
</comment>
<comment type="similarity">
    <text evidence="1">Belongs to the diphthine synthase family.</text>
</comment>
<proteinExistence type="inferred from homology"/>
<name>DPHB_NATPD</name>
<keyword id="KW-0489">Methyltransferase</keyword>
<keyword id="KW-1185">Reference proteome</keyword>
<keyword id="KW-0949">S-adenosyl-L-methionine</keyword>
<keyword id="KW-0808">Transferase</keyword>
<organism>
    <name type="scientific">Natronomonas pharaonis (strain ATCC 35678 / DSM 2160 / CIP 103997 / JCM 8858 / NBRC 14720 / NCIMB 2260 / Gabara)</name>
    <name type="common">Halobacterium pharaonis</name>
    <dbReference type="NCBI Taxonomy" id="348780"/>
    <lineage>
        <taxon>Archaea</taxon>
        <taxon>Methanobacteriati</taxon>
        <taxon>Methanobacteriota</taxon>
        <taxon>Stenosarchaea group</taxon>
        <taxon>Halobacteria</taxon>
        <taxon>Halobacteriales</taxon>
        <taxon>Haloarculaceae</taxon>
        <taxon>Natronomonas</taxon>
    </lineage>
</organism>
<gene>
    <name evidence="1" type="primary">dphB</name>
    <name type="ordered locus">NP_1884A</name>
</gene>
<sequence length="266" mass="28033">MLTFVGLGLYDERSITVAGREALRSADRVFAEFYTSKLAGATVEELQNHHDIDIEVRDRAGVEQEPGPILDAAEAGGAVFLTAGDTMISTTHVDLRLRADNRGIETQIIHGTTAGAAAASLSGLQNYRFGKATTLPFPYAHGGEGVPGSVLDTIADNRKRGLHTLVYLDIKVGTGPRGPDPDHEEYMTADYAAELLAEDLDTVGVAIARAGSPDPVLAADRLSALADRSFGDPLHLLIVPGDLHVVEHDALVALAGAPESALPDPV</sequence>
<protein>
    <recommendedName>
        <fullName evidence="1">Diphthine synthase</fullName>
        <ecNumber evidence="1">2.1.1.98</ecNumber>
    </recommendedName>
    <alternativeName>
        <fullName evidence="1">Diphthamide biosynthesis methyltransferase</fullName>
    </alternativeName>
</protein>
<reference key="1">
    <citation type="journal article" date="2005" name="Genome Res.">
        <title>Living with two extremes: conclusions from the genome sequence of Natronomonas pharaonis.</title>
        <authorList>
            <person name="Falb M."/>
            <person name="Pfeiffer F."/>
            <person name="Palm P."/>
            <person name="Rodewald K."/>
            <person name="Hickmann V."/>
            <person name="Tittor J."/>
            <person name="Oesterhelt D."/>
        </authorList>
    </citation>
    <scope>NUCLEOTIDE SEQUENCE [LARGE SCALE GENOMIC DNA]</scope>
    <source>
        <strain>ATCC 35678 / DSM 2160 / CIP 103997 / JCM 8858 / NBRC 14720 / NCIMB 2260 / Gabara</strain>
    </source>
</reference>
<evidence type="ECO:0000255" key="1">
    <source>
        <dbReference type="HAMAP-Rule" id="MF_01084"/>
    </source>
</evidence>